<organism>
    <name type="scientific">Paraburkholderia phytofirmans (strain DSM 17436 / LMG 22146 / PsJN)</name>
    <name type="common">Burkholderia phytofirmans</name>
    <dbReference type="NCBI Taxonomy" id="398527"/>
    <lineage>
        <taxon>Bacteria</taxon>
        <taxon>Pseudomonadati</taxon>
        <taxon>Pseudomonadota</taxon>
        <taxon>Betaproteobacteria</taxon>
        <taxon>Burkholderiales</taxon>
        <taxon>Burkholderiaceae</taxon>
        <taxon>Paraburkholderia</taxon>
    </lineage>
</organism>
<feature type="chain" id="PRO_1000121200" description="DNA-directed RNA polymerase subunit omega">
    <location>
        <begin position="1"/>
        <end position="67"/>
    </location>
</feature>
<proteinExistence type="inferred from homology"/>
<comment type="function">
    <text evidence="1">Promotes RNA polymerase assembly. Latches the N- and C-terminal regions of the beta' subunit thereby facilitating its interaction with the beta and alpha subunits.</text>
</comment>
<comment type="catalytic activity">
    <reaction evidence="1">
        <text>RNA(n) + a ribonucleoside 5'-triphosphate = RNA(n+1) + diphosphate</text>
        <dbReference type="Rhea" id="RHEA:21248"/>
        <dbReference type="Rhea" id="RHEA-COMP:14527"/>
        <dbReference type="Rhea" id="RHEA-COMP:17342"/>
        <dbReference type="ChEBI" id="CHEBI:33019"/>
        <dbReference type="ChEBI" id="CHEBI:61557"/>
        <dbReference type="ChEBI" id="CHEBI:140395"/>
        <dbReference type="EC" id="2.7.7.6"/>
    </reaction>
</comment>
<comment type="subunit">
    <text evidence="1">The RNAP catalytic core consists of 2 alpha, 1 beta, 1 beta' and 1 omega subunit. When a sigma factor is associated with the core the holoenzyme is formed, which can initiate transcription.</text>
</comment>
<comment type="similarity">
    <text evidence="1">Belongs to the RNA polymerase subunit omega family.</text>
</comment>
<reference key="1">
    <citation type="journal article" date="2011" name="J. Bacteriol.">
        <title>Complete genome sequence of the plant growth-promoting endophyte Burkholderia phytofirmans strain PsJN.</title>
        <authorList>
            <person name="Weilharter A."/>
            <person name="Mitter B."/>
            <person name="Shin M.V."/>
            <person name="Chain P.S."/>
            <person name="Nowak J."/>
            <person name="Sessitsch A."/>
        </authorList>
    </citation>
    <scope>NUCLEOTIDE SEQUENCE [LARGE SCALE GENOMIC DNA]</scope>
    <source>
        <strain>DSM 17436 / LMG 22146 / PsJN</strain>
    </source>
</reference>
<protein>
    <recommendedName>
        <fullName evidence="1">DNA-directed RNA polymerase subunit omega</fullName>
        <shortName evidence="1">RNAP omega subunit</shortName>
        <ecNumber evidence="1">2.7.7.6</ecNumber>
    </recommendedName>
    <alternativeName>
        <fullName evidence="1">RNA polymerase omega subunit</fullName>
    </alternativeName>
    <alternativeName>
        <fullName evidence="1">Transcriptase subunit omega</fullName>
    </alternativeName>
</protein>
<sequence length="67" mass="7428">MARITVEDCLKQIPNRFELALAATYRARQLAQGHTPKIESRDKPTVVALREIAAGQVGVEMLKKVPV</sequence>
<gene>
    <name evidence="1" type="primary">rpoZ</name>
    <name type="ordered locus">Bphyt_3084</name>
</gene>
<name>RPOZ_PARPJ</name>
<evidence type="ECO:0000255" key="1">
    <source>
        <dbReference type="HAMAP-Rule" id="MF_00366"/>
    </source>
</evidence>
<accession>B2T6B2</accession>
<dbReference type="EC" id="2.7.7.6" evidence="1"/>
<dbReference type="EMBL" id="CP001052">
    <property type="protein sequence ID" value="ACD17476.1"/>
    <property type="molecule type" value="Genomic_DNA"/>
</dbReference>
<dbReference type="RefSeq" id="WP_006025620.1">
    <property type="nucleotide sequence ID" value="NC_010681.1"/>
</dbReference>
<dbReference type="SMR" id="B2T6B2"/>
<dbReference type="STRING" id="398527.Bphyt_3084"/>
<dbReference type="GeneID" id="98102617"/>
<dbReference type="KEGG" id="bpy:Bphyt_3084"/>
<dbReference type="eggNOG" id="COG1758">
    <property type="taxonomic scope" value="Bacteria"/>
</dbReference>
<dbReference type="HOGENOM" id="CLU_125406_5_2_4"/>
<dbReference type="OrthoDB" id="9796300at2"/>
<dbReference type="Proteomes" id="UP000001739">
    <property type="component" value="Chromosome 1"/>
</dbReference>
<dbReference type="GO" id="GO:0000428">
    <property type="term" value="C:DNA-directed RNA polymerase complex"/>
    <property type="evidence" value="ECO:0007669"/>
    <property type="project" value="UniProtKB-KW"/>
</dbReference>
<dbReference type="GO" id="GO:0003677">
    <property type="term" value="F:DNA binding"/>
    <property type="evidence" value="ECO:0007669"/>
    <property type="project" value="UniProtKB-UniRule"/>
</dbReference>
<dbReference type="GO" id="GO:0003899">
    <property type="term" value="F:DNA-directed RNA polymerase activity"/>
    <property type="evidence" value="ECO:0007669"/>
    <property type="project" value="UniProtKB-UniRule"/>
</dbReference>
<dbReference type="GO" id="GO:0006351">
    <property type="term" value="P:DNA-templated transcription"/>
    <property type="evidence" value="ECO:0007669"/>
    <property type="project" value="UniProtKB-UniRule"/>
</dbReference>
<dbReference type="Gene3D" id="3.90.940.10">
    <property type="match status" value="1"/>
</dbReference>
<dbReference type="HAMAP" id="MF_00366">
    <property type="entry name" value="RNApol_bact_RpoZ"/>
    <property type="match status" value="1"/>
</dbReference>
<dbReference type="InterPro" id="IPR003716">
    <property type="entry name" value="DNA-dir_RNA_pol_omega"/>
</dbReference>
<dbReference type="InterPro" id="IPR006110">
    <property type="entry name" value="Pol_omega/Rpo6/RPB6"/>
</dbReference>
<dbReference type="InterPro" id="IPR036161">
    <property type="entry name" value="RPB6/omega-like_sf"/>
</dbReference>
<dbReference type="NCBIfam" id="TIGR00690">
    <property type="entry name" value="rpoZ"/>
    <property type="match status" value="1"/>
</dbReference>
<dbReference type="PANTHER" id="PTHR34476">
    <property type="entry name" value="DNA-DIRECTED RNA POLYMERASE SUBUNIT OMEGA"/>
    <property type="match status" value="1"/>
</dbReference>
<dbReference type="PANTHER" id="PTHR34476:SF1">
    <property type="entry name" value="DNA-DIRECTED RNA POLYMERASE SUBUNIT OMEGA"/>
    <property type="match status" value="1"/>
</dbReference>
<dbReference type="Pfam" id="PF01192">
    <property type="entry name" value="RNA_pol_Rpb6"/>
    <property type="match status" value="1"/>
</dbReference>
<dbReference type="SMART" id="SM01409">
    <property type="entry name" value="RNA_pol_Rpb6"/>
    <property type="match status" value="1"/>
</dbReference>
<dbReference type="SUPFAM" id="SSF63562">
    <property type="entry name" value="RPB6/omega subunit-like"/>
    <property type="match status" value="1"/>
</dbReference>
<keyword id="KW-0240">DNA-directed RNA polymerase</keyword>
<keyword id="KW-0548">Nucleotidyltransferase</keyword>
<keyword id="KW-0804">Transcription</keyword>
<keyword id="KW-0808">Transferase</keyword>